<keyword id="KW-0068">Autocatalytic cleavage</keyword>
<keyword id="KW-0963">Cytoplasm</keyword>
<keyword id="KW-0210">Decarboxylase</keyword>
<keyword id="KW-0456">Lyase</keyword>
<keyword id="KW-0566">Pantothenate biosynthesis</keyword>
<keyword id="KW-0670">Pyruvate</keyword>
<keyword id="KW-1185">Reference proteome</keyword>
<keyword id="KW-0704">Schiff base</keyword>
<keyword id="KW-0865">Zymogen</keyword>
<proteinExistence type="inferred from homology"/>
<reference key="1">
    <citation type="submission" date="2007-08" db="EMBL/GenBank/DDBJ databases">
        <authorList>
            <consortium name="The Citrobacter koseri Genome Sequencing Project"/>
            <person name="McClelland M."/>
            <person name="Sanderson E.K."/>
            <person name="Porwollik S."/>
            <person name="Spieth J."/>
            <person name="Clifton W.S."/>
            <person name="Latreille P."/>
            <person name="Courtney L."/>
            <person name="Wang C."/>
            <person name="Pepin K."/>
            <person name="Bhonagiri V."/>
            <person name="Nash W."/>
            <person name="Johnson M."/>
            <person name="Thiruvilangam P."/>
            <person name="Wilson R."/>
        </authorList>
    </citation>
    <scope>NUCLEOTIDE SEQUENCE [LARGE SCALE GENOMIC DNA]</scope>
    <source>
        <strain>ATCC BAA-895 / CDC 4225-83 / SGSC4696</strain>
    </source>
</reference>
<sequence>MIRTMLQGKLHRVKVTQADLHYEGSCAIDQDFLDAAGILENEAIDIWNVTNGKRFSTYAIAAERGSRIISVNGAAAHCAAVGDIVIIASFVTMSDEEARRWQPNVAYFEGDNEMKRTAKAIPVQVA</sequence>
<dbReference type="EC" id="4.1.1.11" evidence="1"/>
<dbReference type="EMBL" id="CP000822">
    <property type="protein sequence ID" value="ABV14314.1"/>
    <property type="molecule type" value="Genomic_DNA"/>
</dbReference>
<dbReference type="RefSeq" id="WP_012134019.1">
    <property type="nucleotide sequence ID" value="NC_009792.1"/>
</dbReference>
<dbReference type="SMR" id="A8ALF1"/>
<dbReference type="STRING" id="290338.CKO_03230"/>
<dbReference type="GeneID" id="45137010"/>
<dbReference type="KEGG" id="cko:CKO_03230"/>
<dbReference type="HOGENOM" id="CLU_115305_2_1_6"/>
<dbReference type="OrthoDB" id="9803983at2"/>
<dbReference type="UniPathway" id="UPA00028">
    <property type="reaction ID" value="UER00002"/>
</dbReference>
<dbReference type="Proteomes" id="UP000008148">
    <property type="component" value="Chromosome"/>
</dbReference>
<dbReference type="GO" id="GO:0005829">
    <property type="term" value="C:cytosol"/>
    <property type="evidence" value="ECO:0007669"/>
    <property type="project" value="TreeGrafter"/>
</dbReference>
<dbReference type="GO" id="GO:0004068">
    <property type="term" value="F:aspartate 1-decarboxylase activity"/>
    <property type="evidence" value="ECO:0007669"/>
    <property type="project" value="UniProtKB-UniRule"/>
</dbReference>
<dbReference type="GO" id="GO:0006523">
    <property type="term" value="P:alanine biosynthetic process"/>
    <property type="evidence" value="ECO:0007669"/>
    <property type="project" value="InterPro"/>
</dbReference>
<dbReference type="GO" id="GO:0015940">
    <property type="term" value="P:pantothenate biosynthetic process"/>
    <property type="evidence" value="ECO:0007669"/>
    <property type="project" value="UniProtKB-UniRule"/>
</dbReference>
<dbReference type="CDD" id="cd06919">
    <property type="entry name" value="Asp_decarbox"/>
    <property type="match status" value="1"/>
</dbReference>
<dbReference type="FunFam" id="2.40.40.20:FF:000004">
    <property type="entry name" value="Aspartate 1-decarboxylase"/>
    <property type="match status" value="1"/>
</dbReference>
<dbReference type="Gene3D" id="2.40.40.20">
    <property type="match status" value="1"/>
</dbReference>
<dbReference type="HAMAP" id="MF_00446">
    <property type="entry name" value="PanD"/>
    <property type="match status" value="1"/>
</dbReference>
<dbReference type="InterPro" id="IPR009010">
    <property type="entry name" value="Asp_de-COase-like_dom_sf"/>
</dbReference>
<dbReference type="InterPro" id="IPR003190">
    <property type="entry name" value="Asp_decarbox"/>
</dbReference>
<dbReference type="NCBIfam" id="TIGR00223">
    <property type="entry name" value="panD"/>
    <property type="match status" value="1"/>
</dbReference>
<dbReference type="PANTHER" id="PTHR21012">
    <property type="entry name" value="ASPARTATE 1-DECARBOXYLASE"/>
    <property type="match status" value="1"/>
</dbReference>
<dbReference type="PANTHER" id="PTHR21012:SF0">
    <property type="entry name" value="ASPARTATE 1-DECARBOXYLASE"/>
    <property type="match status" value="1"/>
</dbReference>
<dbReference type="Pfam" id="PF02261">
    <property type="entry name" value="Asp_decarbox"/>
    <property type="match status" value="1"/>
</dbReference>
<dbReference type="PIRSF" id="PIRSF006246">
    <property type="entry name" value="Asp_decarbox"/>
    <property type="match status" value="1"/>
</dbReference>
<dbReference type="SUPFAM" id="SSF50692">
    <property type="entry name" value="ADC-like"/>
    <property type="match status" value="1"/>
</dbReference>
<organism>
    <name type="scientific">Citrobacter koseri (strain ATCC BAA-895 / CDC 4225-83 / SGSC4696)</name>
    <dbReference type="NCBI Taxonomy" id="290338"/>
    <lineage>
        <taxon>Bacteria</taxon>
        <taxon>Pseudomonadati</taxon>
        <taxon>Pseudomonadota</taxon>
        <taxon>Gammaproteobacteria</taxon>
        <taxon>Enterobacterales</taxon>
        <taxon>Enterobacteriaceae</taxon>
        <taxon>Citrobacter</taxon>
    </lineage>
</organism>
<protein>
    <recommendedName>
        <fullName evidence="1">Aspartate 1-decarboxylase</fullName>
        <ecNumber evidence="1">4.1.1.11</ecNumber>
    </recommendedName>
    <alternativeName>
        <fullName evidence="1">Aspartate alpha-decarboxylase</fullName>
    </alternativeName>
    <component>
        <recommendedName>
            <fullName evidence="1">Aspartate 1-decarboxylase beta chain</fullName>
        </recommendedName>
    </component>
    <component>
        <recommendedName>
            <fullName evidence="1">Aspartate 1-decarboxylase alpha chain</fullName>
        </recommendedName>
    </component>
</protein>
<accession>A8ALF1</accession>
<gene>
    <name evidence="1" type="primary">panD</name>
    <name type="ordered locus">CKO_03230</name>
</gene>
<evidence type="ECO:0000255" key="1">
    <source>
        <dbReference type="HAMAP-Rule" id="MF_00446"/>
    </source>
</evidence>
<name>PAND_CITK8</name>
<comment type="function">
    <text evidence="1">Catalyzes the pyruvoyl-dependent decarboxylation of aspartate to produce beta-alanine.</text>
</comment>
<comment type="catalytic activity">
    <reaction evidence="1">
        <text>L-aspartate + H(+) = beta-alanine + CO2</text>
        <dbReference type="Rhea" id="RHEA:19497"/>
        <dbReference type="ChEBI" id="CHEBI:15378"/>
        <dbReference type="ChEBI" id="CHEBI:16526"/>
        <dbReference type="ChEBI" id="CHEBI:29991"/>
        <dbReference type="ChEBI" id="CHEBI:57966"/>
        <dbReference type="EC" id="4.1.1.11"/>
    </reaction>
</comment>
<comment type="cofactor">
    <cofactor evidence="1">
        <name>pyruvate</name>
        <dbReference type="ChEBI" id="CHEBI:15361"/>
    </cofactor>
    <text evidence="1">Binds 1 pyruvoyl group covalently per subunit.</text>
</comment>
<comment type="pathway">
    <text evidence="1">Cofactor biosynthesis; (R)-pantothenate biosynthesis; beta-alanine from L-aspartate: step 1/1.</text>
</comment>
<comment type="subunit">
    <text evidence="1">Heterooctamer of four alpha and four beta subunits.</text>
</comment>
<comment type="subcellular location">
    <subcellularLocation>
        <location evidence="1">Cytoplasm</location>
    </subcellularLocation>
</comment>
<comment type="PTM">
    <text evidence="1">Is synthesized initially as an inactive proenzyme, which is activated by self-cleavage at a specific serine bond to produce a beta-subunit with a hydroxyl group at its C-terminus and an alpha-subunit with a pyruvoyl group at its N-terminus.</text>
</comment>
<comment type="similarity">
    <text evidence="1">Belongs to the PanD family.</text>
</comment>
<feature type="chain" id="PRO_1000026170" description="Aspartate 1-decarboxylase beta chain" evidence="1">
    <location>
        <begin position="1"/>
        <end position="24"/>
    </location>
</feature>
<feature type="chain" id="PRO_0000316061" description="Aspartate 1-decarboxylase alpha chain" evidence="1">
    <location>
        <begin position="25"/>
        <end position="126"/>
    </location>
</feature>
<feature type="active site" description="Schiff-base intermediate with substrate; via pyruvic acid" evidence="1">
    <location>
        <position position="25"/>
    </location>
</feature>
<feature type="active site" description="Proton donor" evidence="1">
    <location>
        <position position="58"/>
    </location>
</feature>
<feature type="binding site" evidence="1">
    <location>
        <position position="57"/>
    </location>
    <ligand>
        <name>substrate</name>
    </ligand>
</feature>
<feature type="binding site" evidence="1">
    <location>
        <begin position="73"/>
        <end position="75"/>
    </location>
    <ligand>
        <name>substrate</name>
    </ligand>
</feature>
<feature type="modified residue" description="Pyruvic acid (Ser)" evidence="1">
    <location>
        <position position="25"/>
    </location>
</feature>